<feature type="chain" id="PRO_1000187693" description="Membrane protein insertase YidC">
    <location>
        <begin position="1"/>
        <end position="598"/>
    </location>
</feature>
<feature type="transmembrane region" description="Helical" evidence="1">
    <location>
        <begin position="7"/>
        <end position="27"/>
    </location>
</feature>
<feature type="transmembrane region" description="Helical" evidence="1">
    <location>
        <begin position="373"/>
        <end position="393"/>
    </location>
</feature>
<feature type="transmembrane region" description="Helical" evidence="1">
    <location>
        <begin position="447"/>
        <end position="467"/>
    </location>
</feature>
<feature type="transmembrane region" description="Helical" evidence="1">
    <location>
        <begin position="492"/>
        <end position="512"/>
    </location>
</feature>
<feature type="transmembrane region" description="Helical" evidence="1">
    <location>
        <begin position="538"/>
        <end position="558"/>
    </location>
</feature>
<feature type="region of interest" description="Disordered" evidence="2">
    <location>
        <begin position="37"/>
        <end position="71"/>
    </location>
</feature>
<feature type="compositionally biased region" description="Low complexity" evidence="2">
    <location>
        <begin position="40"/>
        <end position="71"/>
    </location>
</feature>
<evidence type="ECO:0000255" key="1">
    <source>
        <dbReference type="HAMAP-Rule" id="MF_01810"/>
    </source>
</evidence>
<evidence type="ECO:0000256" key="2">
    <source>
        <dbReference type="SAM" id="MobiDB-lite"/>
    </source>
</evidence>
<dbReference type="EMBL" id="CP001074">
    <property type="protein sequence ID" value="ACE89472.1"/>
    <property type="molecule type" value="Genomic_DNA"/>
</dbReference>
<dbReference type="SMR" id="B3Q040"/>
<dbReference type="KEGG" id="rec:RHECIAT_CH0000478"/>
<dbReference type="eggNOG" id="COG0706">
    <property type="taxonomic scope" value="Bacteria"/>
</dbReference>
<dbReference type="HOGENOM" id="CLU_016535_1_0_5"/>
<dbReference type="Proteomes" id="UP000008817">
    <property type="component" value="Chromosome"/>
</dbReference>
<dbReference type="GO" id="GO:0005886">
    <property type="term" value="C:plasma membrane"/>
    <property type="evidence" value="ECO:0007669"/>
    <property type="project" value="UniProtKB-SubCell"/>
</dbReference>
<dbReference type="GO" id="GO:0032977">
    <property type="term" value="F:membrane insertase activity"/>
    <property type="evidence" value="ECO:0007669"/>
    <property type="project" value="InterPro"/>
</dbReference>
<dbReference type="GO" id="GO:0051205">
    <property type="term" value="P:protein insertion into membrane"/>
    <property type="evidence" value="ECO:0007669"/>
    <property type="project" value="TreeGrafter"/>
</dbReference>
<dbReference type="GO" id="GO:0015031">
    <property type="term" value="P:protein transport"/>
    <property type="evidence" value="ECO:0007669"/>
    <property type="project" value="UniProtKB-KW"/>
</dbReference>
<dbReference type="CDD" id="cd20070">
    <property type="entry name" value="5TM_YidC_Alb3"/>
    <property type="match status" value="1"/>
</dbReference>
<dbReference type="CDD" id="cd19961">
    <property type="entry name" value="EcYidC-like_peri"/>
    <property type="match status" value="1"/>
</dbReference>
<dbReference type="Gene3D" id="2.70.98.90">
    <property type="match status" value="1"/>
</dbReference>
<dbReference type="HAMAP" id="MF_01810">
    <property type="entry name" value="YidC_type1"/>
    <property type="match status" value="1"/>
</dbReference>
<dbReference type="InterPro" id="IPR019998">
    <property type="entry name" value="Membr_insert_YidC"/>
</dbReference>
<dbReference type="InterPro" id="IPR028053">
    <property type="entry name" value="Membr_insert_YidC_N"/>
</dbReference>
<dbReference type="InterPro" id="IPR001708">
    <property type="entry name" value="YidC/ALB3/OXA1/COX18"/>
</dbReference>
<dbReference type="InterPro" id="IPR028055">
    <property type="entry name" value="YidC/Oxa/ALB_C"/>
</dbReference>
<dbReference type="InterPro" id="IPR047196">
    <property type="entry name" value="YidC_ALB_C"/>
</dbReference>
<dbReference type="InterPro" id="IPR038221">
    <property type="entry name" value="YidC_periplasmic_sf"/>
</dbReference>
<dbReference type="NCBIfam" id="NF002353">
    <property type="entry name" value="PRK01318.1-4"/>
    <property type="match status" value="1"/>
</dbReference>
<dbReference type="NCBIfam" id="TIGR03593">
    <property type="entry name" value="yidC_nterm"/>
    <property type="match status" value="1"/>
</dbReference>
<dbReference type="NCBIfam" id="TIGR03592">
    <property type="entry name" value="yidC_oxa1_cterm"/>
    <property type="match status" value="1"/>
</dbReference>
<dbReference type="PANTHER" id="PTHR12428:SF65">
    <property type="entry name" value="CYTOCHROME C OXIDASE ASSEMBLY PROTEIN COX18, MITOCHONDRIAL"/>
    <property type="match status" value="1"/>
</dbReference>
<dbReference type="PANTHER" id="PTHR12428">
    <property type="entry name" value="OXA1"/>
    <property type="match status" value="1"/>
</dbReference>
<dbReference type="Pfam" id="PF02096">
    <property type="entry name" value="60KD_IMP"/>
    <property type="match status" value="1"/>
</dbReference>
<dbReference type="Pfam" id="PF14849">
    <property type="entry name" value="YidC_periplas"/>
    <property type="match status" value="1"/>
</dbReference>
<dbReference type="PRINTS" id="PR00701">
    <property type="entry name" value="60KDINNERMP"/>
</dbReference>
<dbReference type="PRINTS" id="PR01900">
    <property type="entry name" value="YIDCPROTEIN"/>
</dbReference>
<reference key="1">
    <citation type="journal article" date="2010" name="Appl. Environ. Microbiol.">
        <title>Conserved symbiotic plasmid DNA sequences in the multireplicon pangenomic structure of Rhizobium etli.</title>
        <authorList>
            <person name="Gonzalez V."/>
            <person name="Acosta J.L."/>
            <person name="Santamaria R.I."/>
            <person name="Bustos P."/>
            <person name="Fernandez J.L."/>
            <person name="Hernandez Gonzalez I.L."/>
            <person name="Diaz R."/>
            <person name="Flores M."/>
            <person name="Palacios R."/>
            <person name="Mora J."/>
            <person name="Davila G."/>
        </authorList>
    </citation>
    <scope>NUCLEOTIDE SEQUENCE [LARGE SCALE GENOMIC DNA]</scope>
    <source>
        <strain>CIAT 652</strain>
    </source>
</reference>
<comment type="function">
    <text evidence="1">Required for the insertion and/or proper folding and/or complex formation of integral membrane proteins into the membrane. Involved in integration of membrane proteins that insert both dependently and independently of the Sec translocase complex, as well as at least some lipoproteins. Aids folding of multispanning membrane proteins.</text>
</comment>
<comment type="subunit">
    <text evidence="1">Interacts with the Sec translocase complex via SecD. Specifically interacts with transmembrane segments of nascent integral membrane proteins during membrane integration.</text>
</comment>
<comment type="subcellular location">
    <subcellularLocation>
        <location evidence="1">Cell inner membrane</location>
        <topology evidence="1">Multi-pass membrane protein</topology>
    </subcellularLocation>
</comment>
<comment type="similarity">
    <text evidence="1">Belongs to the OXA1/ALB3/YidC family. Type 1 subfamily.</text>
</comment>
<name>YIDC_RHIE6</name>
<protein>
    <recommendedName>
        <fullName evidence="1">Membrane protein insertase YidC</fullName>
    </recommendedName>
    <alternativeName>
        <fullName evidence="1">Foldase YidC</fullName>
    </alternativeName>
    <alternativeName>
        <fullName evidence="1">Membrane integrase YidC</fullName>
    </alternativeName>
    <alternativeName>
        <fullName evidence="1">Membrane protein YidC</fullName>
    </alternativeName>
</protein>
<sequence length="598" mass="66428">MMENNRNYFIAIALSVLIVLGWQFLYMNPRIEAQRKAQEAQKAQQQTEQVQQPAAGGATPAPASGTAPSGQAVATATLEQALAKTPRVAIDTPALSGSINLAGARLDDLKLKGYHETVDDSSPIITLFSPAETKDGYFTELGYIGSDATGSVPGASTLWTAPEGAKLTEKTPVTLSYTNDKGLTFTRTISVDERYMFTIADKVANTGQAPVSLSSYGRVTRYNKPTTPSAYVLHEGFIGVIGDDGLIESKYTAVEKEAVMPAKSTGGWLGITDKYWAATIVPPQASAYEARFSHFSDGQPRYQADYKDDAFTVAPGQSVELKNLVFAGAKEVPVIDGYEASYSIPRFDRLIDWGWFYFITKPMFKLMDFFFRFFGNFGVAILCTTIVVKALFFPLASKQYASMANMKRMQPKMEELKAKFGDDRMGLQQATMQLYKEEKINPIAGCWPVALQIPIFFSLYKVIYITIEMRHAPFFGWIQDLSAPDPTTIVNLFGLLPFTAPTFLHLGVWPLIMGVTMFLQMRMNPTPPDPTQAMIFNWMPLVFMFMLASFPAGLVIYWAWNNTLSVIQQSVIMKRHGVKIELFDNLKGLFRRKTAPSK</sequence>
<gene>
    <name evidence="1" type="primary">yidC</name>
    <name type="ordered locus">RHECIAT_CH0000478</name>
</gene>
<accession>B3Q040</accession>
<keyword id="KW-0997">Cell inner membrane</keyword>
<keyword id="KW-1003">Cell membrane</keyword>
<keyword id="KW-0143">Chaperone</keyword>
<keyword id="KW-0472">Membrane</keyword>
<keyword id="KW-0653">Protein transport</keyword>
<keyword id="KW-0812">Transmembrane</keyword>
<keyword id="KW-1133">Transmembrane helix</keyword>
<keyword id="KW-0813">Transport</keyword>
<organism>
    <name type="scientific">Rhizobium etli (strain CIAT 652)</name>
    <dbReference type="NCBI Taxonomy" id="491916"/>
    <lineage>
        <taxon>Bacteria</taxon>
        <taxon>Pseudomonadati</taxon>
        <taxon>Pseudomonadota</taxon>
        <taxon>Alphaproteobacteria</taxon>
        <taxon>Hyphomicrobiales</taxon>
        <taxon>Rhizobiaceae</taxon>
        <taxon>Rhizobium/Agrobacterium group</taxon>
        <taxon>Rhizobium</taxon>
    </lineage>
</organism>
<proteinExistence type="inferred from homology"/>